<organismHost>
    <name type="scientific">Acheta domesticus</name>
    <name type="common">House cricket</name>
    <dbReference type="NCBI Taxonomy" id="6997"/>
</organismHost>
<organismHost>
    <name type="scientific">Chilo suppressalis</name>
    <name type="common">Asiatic rice borer moth</name>
    <dbReference type="NCBI Taxonomy" id="168631"/>
</organismHost>
<organismHost>
    <name type="scientific">Gryllus bimaculatus</name>
    <name type="common">Two-spotted cricket</name>
    <dbReference type="NCBI Taxonomy" id="6999"/>
</organismHost>
<organismHost>
    <name type="scientific">Gryllus campestris</name>
    <dbReference type="NCBI Taxonomy" id="58607"/>
</organismHost>
<organismHost>
    <name type="scientific">Spodoptera frugiperda</name>
    <name type="common">Fall armyworm</name>
    <dbReference type="NCBI Taxonomy" id="7108"/>
</organismHost>
<reference key="1">
    <citation type="journal article" date="2001" name="Virology">
        <title>Analysis of the first complete DNA sequence of an invertebrate iridovirus: coding strategy of the genome of Chilo iridescent virus.</title>
        <authorList>
            <person name="Jakob N.J."/>
            <person name="Mueller K."/>
            <person name="Bahr U."/>
            <person name="Darai G."/>
        </authorList>
    </citation>
    <scope>NUCLEOTIDE SEQUENCE [LARGE SCALE GENOMIC DNA]</scope>
</reference>
<reference key="2">
    <citation type="journal article" date="2007" name="Virol. J.">
        <title>Comparative genomic analysis of the family Iridoviridae: re-annotating and defining the core set of iridovirus genes.</title>
        <authorList>
            <person name="Eaton H.E."/>
            <person name="Metcalf J."/>
            <person name="Penny E."/>
            <person name="Tcherepanov V."/>
            <person name="Upton C."/>
            <person name="Brunetti C.R."/>
        </authorList>
    </citation>
    <scope>GENOME REANNOTATION</scope>
</reference>
<name>VF019_IIV6</name>
<accession>Q91G76</accession>
<dbReference type="EMBL" id="AF303741">
    <property type="protein sequence ID" value="AAK81956.1"/>
    <property type="molecule type" value="Genomic_DNA"/>
</dbReference>
<dbReference type="RefSeq" id="NP_149482.1">
    <property type="nucleotide sequence ID" value="NC_003038.1"/>
</dbReference>
<dbReference type="SMR" id="Q91G76"/>
<dbReference type="KEGG" id="vg:1733380"/>
<dbReference type="OrthoDB" id="33789at10239"/>
<dbReference type="Proteomes" id="UP000001359">
    <property type="component" value="Genome"/>
</dbReference>
<dbReference type="CDD" id="cd10443">
    <property type="entry name" value="GIY-YIG_HE_Tlr8p_PBC-V_like"/>
    <property type="match status" value="1"/>
</dbReference>
<dbReference type="Gene3D" id="3.40.1440.10">
    <property type="entry name" value="GIY-YIG endonuclease"/>
    <property type="match status" value="1"/>
</dbReference>
<dbReference type="InterPro" id="IPR000305">
    <property type="entry name" value="GIY-YIG_endonuc"/>
</dbReference>
<dbReference type="InterPro" id="IPR035901">
    <property type="entry name" value="GIY-YIG_endonuc_sf"/>
</dbReference>
<dbReference type="InterPro" id="IPR018879">
    <property type="entry name" value="MSV199_dom"/>
</dbReference>
<dbReference type="Pfam" id="PF01541">
    <property type="entry name" value="GIY-YIG"/>
    <property type="match status" value="1"/>
</dbReference>
<dbReference type="Pfam" id="PF10553">
    <property type="entry name" value="MSV199"/>
    <property type="match status" value="1"/>
</dbReference>
<dbReference type="SMART" id="SM00465">
    <property type="entry name" value="GIYc"/>
    <property type="match status" value="1"/>
</dbReference>
<dbReference type="SUPFAM" id="SSF82771">
    <property type="entry name" value="GIY-YIG endonuclease"/>
    <property type="match status" value="1"/>
</dbReference>
<dbReference type="PROSITE" id="PS50164">
    <property type="entry name" value="GIY_YIG"/>
    <property type="match status" value="1"/>
</dbReference>
<comment type="similarity">
    <text evidence="2">Belongs to the IIV-6 019R family.</text>
</comment>
<sequence length="279" mass="32735">MKIGYIYAIENNLNDEVYIGSTLRTIEERFSEHKASARRRPTCTFHKFMSLHGIEHFKIIELKKIEVNSFFELQALEESYIRDYGSLNTINGVNKAAVHTRNEILVKRKIYSKECVKLPPLDEVIKIATKASLKKLEINEFIDLFIGEENKWNKMFDSDLSGIHISSLILNQLGYEGEFKNQQTCFKRFLKRNNIIIQEFSSSNPELKLYPSIQEEMKNMKTNVIANRKWLIANPRDLKKIIMKLNTKNGDAIREYYICMDELVQFYSQYSLSYDSNNN</sequence>
<organism>
    <name type="scientific">Invertebrate iridescent virus 6</name>
    <name type="common">IIV-6</name>
    <name type="synonym">Chilo iridescent virus</name>
    <dbReference type="NCBI Taxonomy" id="176652"/>
    <lineage>
        <taxon>Viruses</taxon>
        <taxon>Varidnaviria</taxon>
        <taxon>Bamfordvirae</taxon>
        <taxon>Nucleocytoviricota</taxon>
        <taxon>Megaviricetes</taxon>
        <taxon>Pimascovirales</taxon>
        <taxon>Iridoviridae</taxon>
        <taxon>Betairidovirinae</taxon>
        <taxon>Iridovirus</taxon>
    </lineage>
</organism>
<evidence type="ECO:0000255" key="1">
    <source>
        <dbReference type="PROSITE-ProRule" id="PRU00977"/>
    </source>
</evidence>
<evidence type="ECO:0000305" key="2"/>
<keyword id="KW-1185">Reference proteome</keyword>
<protein>
    <recommendedName>
        <fullName>Uncharacterized protein 019R</fullName>
    </recommendedName>
</protein>
<gene>
    <name type="ORF">IIV6-019R</name>
</gene>
<proteinExistence type="inferred from homology"/>
<feature type="chain" id="PRO_0000377961" description="Uncharacterized protein 019R">
    <location>
        <begin position="1"/>
        <end position="279"/>
    </location>
</feature>
<feature type="domain" description="GIY-YIG" evidence="1">
    <location>
        <begin position="2"/>
        <end position="90"/>
    </location>
</feature>